<protein>
    <recommendedName>
        <fullName evidence="1">UDP-N-acetylglucosamine 1-carboxyvinyltransferase 1</fullName>
        <ecNumber evidence="1">2.5.1.7</ecNumber>
    </recommendedName>
    <alternativeName>
        <fullName evidence="1">Enoylpyruvate transferase 1</fullName>
    </alternativeName>
    <alternativeName>
        <fullName evidence="1">UDP-N-acetylglucosamine enolpyruvyl transferase 1</fullName>
        <shortName evidence="1">EPT 1</shortName>
    </alternativeName>
</protein>
<reference key="1">
    <citation type="journal article" date="2001" name="J. Bacteriol.">
        <title>Genome sequence and comparative analysis of the solvent-producing bacterium Clostridium acetobutylicum.</title>
        <authorList>
            <person name="Noelling J."/>
            <person name="Breton G."/>
            <person name="Omelchenko M.V."/>
            <person name="Makarova K.S."/>
            <person name="Zeng Q."/>
            <person name="Gibson R."/>
            <person name="Lee H.M."/>
            <person name="Dubois J."/>
            <person name="Qiu D."/>
            <person name="Hitti J."/>
            <person name="Wolf Y.I."/>
            <person name="Tatusov R.L."/>
            <person name="Sabathe F."/>
            <person name="Doucette-Stamm L.A."/>
            <person name="Soucaille P."/>
            <person name="Daly M.J."/>
            <person name="Bennett G.N."/>
            <person name="Koonin E.V."/>
            <person name="Smith D.R."/>
        </authorList>
    </citation>
    <scope>NUCLEOTIDE SEQUENCE [LARGE SCALE GENOMIC DNA]</scope>
    <source>
        <strain>ATCC 824 / DSM 792 / JCM 1419 / IAM 19013 / LMG 5710 / NBRC 13948 / NRRL B-527 / VKM B-1787 / 2291 / W</strain>
    </source>
</reference>
<name>MURA1_CLOAB</name>
<sequence>MNKFIIKGGETLNGEVDISCAKNSVLPIIAATILCGEKCTIKNCPMLLDVFVISDLLKSIGAQVDIDLNSGDMKIDTSNVKSIEPDAELVRKMRGSFLIMGPMISRYGRFKISLPGGCNIGTRPIDLHLKGLKALGVNIEIGHGYVEANAAKLLGDRIYLDFPSVGATENIIMASVFAEGETIIENAAQEPEIDDLINFLNKMGSDIKKIETGAIIIRGVKELKGIKYTPIYDRIEAGTFIIAAAITKSKIKINGVEEKSIKPMIAKFCEMGINMEIDGKSLIIDGRNELKPVDIKTMPYPGFPTDMQAQIMSLLCCTEGTSVITETIFENRFMHVPELKRFGANIKIDGRSAVIVGVKELTGCSARATDLRAGAALILAGLVAEGETQISDIYHVDRGYVSIEKKLTKLGAKIERVE</sequence>
<evidence type="ECO:0000255" key="1">
    <source>
        <dbReference type="HAMAP-Rule" id="MF_00111"/>
    </source>
</evidence>
<gene>
    <name evidence="1" type="primary">murA1</name>
    <name type="synonym">murA</name>
    <name type="ordered locus">CA_C2862</name>
</gene>
<organism>
    <name type="scientific">Clostridium acetobutylicum (strain ATCC 824 / DSM 792 / JCM 1419 / IAM 19013 / LMG 5710 / NBRC 13948 / NRRL B-527 / VKM B-1787 / 2291 / W)</name>
    <dbReference type="NCBI Taxonomy" id="272562"/>
    <lineage>
        <taxon>Bacteria</taxon>
        <taxon>Bacillati</taxon>
        <taxon>Bacillota</taxon>
        <taxon>Clostridia</taxon>
        <taxon>Eubacteriales</taxon>
        <taxon>Clostridiaceae</taxon>
        <taxon>Clostridium</taxon>
    </lineage>
</organism>
<comment type="function">
    <text evidence="1">Cell wall formation. Adds enolpyruvyl to UDP-N-acetylglucosamine.</text>
</comment>
<comment type="catalytic activity">
    <reaction evidence="1">
        <text>phosphoenolpyruvate + UDP-N-acetyl-alpha-D-glucosamine = UDP-N-acetyl-3-O-(1-carboxyvinyl)-alpha-D-glucosamine + phosphate</text>
        <dbReference type="Rhea" id="RHEA:18681"/>
        <dbReference type="ChEBI" id="CHEBI:43474"/>
        <dbReference type="ChEBI" id="CHEBI:57705"/>
        <dbReference type="ChEBI" id="CHEBI:58702"/>
        <dbReference type="ChEBI" id="CHEBI:68483"/>
        <dbReference type="EC" id="2.5.1.7"/>
    </reaction>
</comment>
<comment type="pathway">
    <text evidence="1">Cell wall biogenesis; peptidoglycan biosynthesis.</text>
</comment>
<comment type="subcellular location">
    <subcellularLocation>
        <location evidence="1">Cytoplasm</location>
    </subcellularLocation>
</comment>
<comment type="similarity">
    <text evidence="1">Belongs to the EPSP synthase family. MurA subfamily.</text>
</comment>
<proteinExistence type="inferred from homology"/>
<dbReference type="EC" id="2.5.1.7" evidence="1"/>
<dbReference type="EMBL" id="AE001437">
    <property type="protein sequence ID" value="AAK80805.1"/>
    <property type="molecule type" value="Genomic_DNA"/>
</dbReference>
<dbReference type="PIR" id="B97252">
    <property type="entry name" value="B97252"/>
</dbReference>
<dbReference type="RefSeq" id="NP_349465.1">
    <property type="nucleotide sequence ID" value="NC_003030.1"/>
</dbReference>
<dbReference type="RefSeq" id="WP_010966146.1">
    <property type="nucleotide sequence ID" value="NC_003030.1"/>
</dbReference>
<dbReference type="SMR" id="Q97F79"/>
<dbReference type="STRING" id="272562.CA_C2862"/>
<dbReference type="GeneID" id="44999350"/>
<dbReference type="KEGG" id="cac:CA_C2862"/>
<dbReference type="PATRIC" id="fig|272562.8.peg.3046"/>
<dbReference type="eggNOG" id="COG0766">
    <property type="taxonomic scope" value="Bacteria"/>
</dbReference>
<dbReference type="HOGENOM" id="CLU_027387_0_0_9"/>
<dbReference type="OrthoDB" id="9803760at2"/>
<dbReference type="UniPathway" id="UPA00219"/>
<dbReference type="Proteomes" id="UP000000814">
    <property type="component" value="Chromosome"/>
</dbReference>
<dbReference type="GO" id="GO:0005737">
    <property type="term" value="C:cytoplasm"/>
    <property type="evidence" value="ECO:0007669"/>
    <property type="project" value="UniProtKB-SubCell"/>
</dbReference>
<dbReference type="GO" id="GO:0008760">
    <property type="term" value="F:UDP-N-acetylglucosamine 1-carboxyvinyltransferase activity"/>
    <property type="evidence" value="ECO:0007669"/>
    <property type="project" value="UniProtKB-UniRule"/>
</dbReference>
<dbReference type="GO" id="GO:0051301">
    <property type="term" value="P:cell division"/>
    <property type="evidence" value="ECO:0007669"/>
    <property type="project" value="UniProtKB-KW"/>
</dbReference>
<dbReference type="GO" id="GO:0071555">
    <property type="term" value="P:cell wall organization"/>
    <property type="evidence" value="ECO:0007669"/>
    <property type="project" value="UniProtKB-KW"/>
</dbReference>
<dbReference type="GO" id="GO:0009252">
    <property type="term" value="P:peptidoglycan biosynthetic process"/>
    <property type="evidence" value="ECO:0007669"/>
    <property type="project" value="UniProtKB-UniRule"/>
</dbReference>
<dbReference type="GO" id="GO:0008360">
    <property type="term" value="P:regulation of cell shape"/>
    <property type="evidence" value="ECO:0007669"/>
    <property type="project" value="UniProtKB-KW"/>
</dbReference>
<dbReference type="GO" id="GO:0019277">
    <property type="term" value="P:UDP-N-acetylgalactosamine biosynthetic process"/>
    <property type="evidence" value="ECO:0007669"/>
    <property type="project" value="InterPro"/>
</dbReference>
<dbReference type="CDD" id="cd01555">
    <property type="entry name" value="UdpNAET"/>
    <property type="match status" value="1"/>
</dbReference>
<dbReference type="Gene3D" id="3.65.10.10">
    <property type="entry name" value="Enolpyruvate transferase domain"/>
    <property type="match status" value="2"/>
</dbReference>
<dbReference type="HAMAP" id="MF_00111">
    <property type="entry name" value="MurA"/>
    <property type="match status" value="1"/>
</dbReference>
<dbReference type="InterPro" id="IPR001986">
    <property type="entry name" value="Enolpyruvate_Tfrase_dom"/>
</dbReference>
<dbReference type="InterPro" id="IPR036968">
    <property type="entry name" value="Enolpyruvate_Tfrase_sf"/>
</dbReference>
<dbReference type="InterPro" id="IPR050068">
    <property type="entry name" value="MurA_subfamily"/>
</dbReference>
<dbReference type="InterPro" id="IPR013792">
    <property type="entry name" value="RNA3'P_cycl/enolpyr_Trfase_a/b"/>
</dbReference>
<dbReference type="InterPro" id="IPR005750">
    <property type="entry name" value="UDP_GlcNAc_COvinyl_MurA"/>
</dbReference>
<dbReference type="NCBIfam" id="TIGR01072">
    <property type="entry name" value="murA"/>
    <property type="match status" value="1"/>
</dbReference>
<dbReference type="NCBIfam" id="NF006873">
    <property type="entry name" value="PRK09369.1"/>
    <property type="match status" value="1"/>
</dbReference>
<dbReference type="PANTHER" id="PTHR43783">
    <property type="entry name" value="UDP-N-ACETYLGLUCOSAMINE 1-CARBOXYVINYLTRANSFERASE"/>
    <property type="match status" value="1"/>
</dbReference>
<dbReference type="PANTHER" id="PTHR43783:SF1">
    <property type="entry name" value="UDP-N-ACETYLGLUCOSAMINE 1-CARBOXYVINYLTRANSFERASE"/>
    <property type="match status" value="1"/>
</dbReference>
<dbReference type="Pfam" id="PF00275">
    <property type="entry name" value="EPSP_synthase"/>
    <property type="match status" value="1"/>
</dbReference>
<dbReference type="SUPFAM" id="SSF55205">
    <property type="entry name" value="EPT/RTPC-like"/>
    <property type="match status" value="1"/>
</dbReference>
<keyword id="KW-0131">Cell cycle</keyword>
<keyword id="KW-0132">Cell division</keyword>
<keyword id="KW-0133">Cell shape</keyword>
<keyword id="KW-0961">Cell wall biogenesis/degradation</keyword>
<keyword id="KW-0963">Cytoplasm</keyword>
<keyword id="KW-0573">Peptidoglycan synthesis</keyword>
<keyword id="KW-0670">Pyruvate</keyword>
<keyword id="KW-1185">Reference proteome</keyword>
<keyword id="KW-0808">Transferase</keyword>
<accession>Q97F79</accession>
<feature type="chain" id="PRO_0000178863" description="UDP-N-acetylglucosamine 1-carboxyvinyltransferase 1">
    <location>
        <begin position="1"/>
        <end position="418"/>
    </location>
</feature>
<feature type="active site" description="Proton donor" evidence="1">
    <location>
        <position position="118"/>
    </location>
</feature>
<feature type="binding site" evidence="1">
    <location>
        <begin position="22"/>
        <end position="23"/>
    </location>
    <ligand>
        <name>phosphoenolpyruvate</name>
        <dbReference type="ChEBI" id="CHEBI:58702"/>
    </ligand>
</feature>
<feature type="binding site" evidence="1">
    <location>
        <position position="94"/>
    </location>
    <ligand>
        <name>UDP-N-acetyl-alpha-D-glucosamine</name>
        <dbReference type="ChEBI" id="CHEBI:57705"/>
    </ligand>
</feature>
<feature type="binding site" evidence="1">
    <location>
        <begin position="123"/>
        <end position="127"/>
    </location>
    <ligand>
        <name>UDP-N-acetyl-alpha-D-glucosamine</name>
        <dbReference type="ChEBI" id="CHEBI:57705"/>
    </ligand>
</feature>
<feature type="binding site" evidence="1">
    <location>
        <position position="306"/>
    </location>
    <ligand>
        <name>UDP-N-acetyl-alpha-D-glucosamine</name>
        <dbReference type="ChEBI" id="CHEBI:57705"/>
    </ligand>
</feature>
<feature type="binding site" evidence="1">
    <location>
        <position position="328"/>
    </location>
    <ligand>
        <name>UDP-N-acetyl-alpha-D-glucosamine</name>
        <dbReference type="ChEBI" id="CHEBI:57705"/>
    </ligand>
</feature>
<feature type="modified residue" description="2-(S-cysteinyl)pyruvic acid O-phosphothioketal" evidence="1">
    <location>
        <position position="118"/>
    </location>
</feature>